<reference key="1">
    <citation type="journal article" date="2005" name="Nature">
        <title>Generation and annotation of the DNA sequences of human chromosomes 2 and 4.</title>
        <authorList>
            <person name="Hillier L.W."/>
            <person name="Graves T.A."/>
            <person name="Fulton R.S."/>
            <person name="Fulton L.A."/>
            <person name="Pepin K.H."/>
            <person name="Minx P."/>
            <person name="Wagner-McPherson C."/>
            <person name="Layman D."/>
            <person name="Wylie K."/>
            <person name="Sekhon M."/>
            <person name="Becker M.C."/>
            <person name="Fewell G.A."/>
            <person name="Delehaunty K.D."/>
            <person name="Miner T.L."/>
            <person name="Nash W.E."/>
            <person name="Kremitzki C."/>
            <person name="Oddy L."/>
            <person name="Du H."/>
            <person name="Sun H."/>
            <person name="Bradshaw-Cordum H."/>
            <person name="Ali J."/>
            <person name="Carter J."/>
            <person name="Cordes M."/>
            <person name="Harris A."/>
            <person name="Isak A."/>
            <person name="van Brunt A."/>
            <person name="Nguyen C."/>
            <person name="Du F."/>
            <person name="Courtney L."/>
            <person name="Kalicki J."/>
            <person name="Ozersky P."/>
            <person name="Abbott S."/>
            <person name="Armstrong J."/>
            <person name="Belter E.A."/>
            <person name="Caruso L."/>
            <person name="Cedroni M."/>
            <person name="Cotton M."/>
            <person name="Davidson T."/>
            <person name="Desai A."/>
            <person name="Elliott G."/>
            <person name="Erb T."/>
            <person name="Fronick C."/>
            <person name="Gaige T."/>
            <person name="Haakenson W."/>
            <person name="Haglund K."/>
            <person name="Holmes A."/>
            <person name="Harkins R."/>
            <person name="Kim K."/>
            <person name="Kruchowski S.S."/>
            <person name="Strong C.M."/>
            <person name="Grewal N."/>
            <person name="Goyea E."/>
            <person name="Hou S."/>
            <person name="Levy A."/>
            <person name="Martinka S."/>
            <person name="Mead K."/>
            <person name="McLellan M.D."/>
            <person name="Meyer R."/>
            <person name="Randall-Maher J."/>
            <person name="Tomlinson C."/>
            <person name="Dauphin-Kohlberg S."/>
            <person name="Kozlowicz-Reilly A."/>
            <person name="Shah N."/>
            <person name="Swearengen-Shahid S."/>
            <person name="Snider J."/>
            <person name="Strong J.T."/>
            <person name="Thompson J."/>
            <person name="Yoakum M."/>
            <person name="Leonard S."/>
            <person name="Pearman C."/>
            <person name="Trani L."/>
            <person name="Radionenko M."/>
            <person name="Waligorski J.E."/>
            <person name="Wang C."/>
            <person name="Rock S.M."/>
            <person name="Tin-Wollam A.-M."/>
            <person name="Maupin R."/>
            <person name="Latreille P."/>
            <person name="Wendl M.C."/>
            <person name="Yang S.-P."/>
            <person name="Pohl C."/>
            <person name="Wallis J.W."/>
            <person name="Spieth J."/>
            <person name="Bieri T.A."/>
            <person name="Berkowicz N."/>
            <person name="Nelson J.O."/>
            <person name="Osborne J."/>
            <person name="Ding L."/>
            <person name="Meyer R."/>
            <person name="Sabo A."/>
            <person name="Shotland Y."/>
            <person name="Sinha P."/>
            <person name="Wohldmann P.E."/>
            <person name="Cook L.L."/>
            <person name="Hickenbotham M.T."/>
            <person name="Eldred J."/>
            <person name="Williams D."/>
            <person name="Jones T.A."/>
            <person name="She X."/>
            <person name="Ciccarelli F.D."/>
            <person name="Izaurralde E."/>
            <person name="Taylor J."/>
            <person name="Schmutz J."/>
            <person name="Myers R.M."/>
            <person name="Cox D.R."/>
            <person name="Huang X."/>
            <person name="McPherson J.D."/>
            <person name="Mardis E.R."/>
            <person name="Clifton S.W."/>
            <person name="Warren W.C."/>
            <person name="Chinwalla A.T."/>
            <person name="Eddy S.R."/>
            <person name="Marra M.A."/>
            <person name="Ovcharenko I."/>
            <person name="Furey T.S."/>
            <person name="Miller W."/>
            <person name="Eichler E.E."/>
            <person name="Bork P."/>
            <person name="Suyama M."/>
            <person name="Torrents D."/>
            <person name="Waterston R.H."/>
            <person name="Wilson R.K."/>
        </authorList>
    </citation>
    <scope>NUCLEOTIDE SEQUENCE [LARGE SCALE GENOMIC DNA]</scope>
</reference>
<proteinExistence type="evidence at protein level"/>
<evidence type="ECO:0000256" key="1">
    <source>
        <dbReference type="SAM" id="MobiDB-lite"/>
    </source>
</evidence>
<feature type="chain" id="PRO_0000348053" description="Maestro heat-like repeat-containing protein family member 2A">
    <location>
        <begin position="1"/>
        <end position="1674"/>
    </location>
</feature>
<feature type="repeat" description="HEAT 1">
    <location>
        <begin position="73"/>
        <end position="96"/>
    </location>
</feature>
<feature type="repeat" description="HEAT 2">
    <location>
        <begin position="97"/>
        <end position="133"/>
    </location>
</feature>
<feature type="repeat" description="HEAT 3">
    <location>
        <begin position="195"/>
        <end position="234"/>
    </location>
</feature>
<feature type="repeat" description="HEAT 4">
    <location>
        <begin position="254"/>
        <end position="292"/>
    </location>
</feature>
<feature type="repeat" description="HEAT 5">
    <location>
        <begin position="382"/>
        <end position="419"/>
    </location>
</feature>
<feature type="repeat" description="HEAT 6">
    <location>
        <begin position="424"/>
        <end position="461"/>
    </location>
</feature>
<feature type="repeat" description="HEAT 7">
    <location>
        <begin position="573"/>
        <end position="612"/>
    </location>
</feature>
<feature type="repeat" description="HEAT 8">
    <location>
        <begin position="615"/>
        <end position="641"/>
    </location>
</feature>
<feature type="repeat" description="HEAT 9">
    <location>
        <begin position="642"/>
        <end position="679"/>
    </location>
</feature>
<feature type="repeat" description="HEAT 10">
    <location>
        <begin position="739"/>
        <end position="776"/>
    </location>
</feature>
<feature type="repeat" description="HEAT 11">
    <location>
        <begin position="993"/>
        <end position="1030"/>
    </location>
</feature>
<feature type="repeat" description="HEAT 12">
    <location>
        <begin position="1221"/>
        <end position="1263"/>
    </location>
</feature>
<feature type="repeat" description="HEAT 13">
    <location>
        <begin position="1381"/>
        <end position="1420"/>
    </location>
</feature>
<feature type="repeat" description="HEAT 14">
    <location>
        <begin position="1627"/>
        <end position="1674"/>
    </location>
</feature>
<feature type="region of interest" description="Disordered" evidence="1">
    <location>
        <begin position="1"/>
        <end position="26"/>
    </location>
</feature>
<feature type="sequence variant" id="VAR_046073" description="In dbSNP:rs6431631.">
    <original>A</original>
    <variation>D</variation>
    <location>
        <position position="11"/>
    </location>
</feature>
<feature type="sequence variant" id="VAR_046074" description="In dbSNP:rs1500481.">
    <original>Y</original>
    <variation>H</variation>
    <location>
        <position position="271"/>
    </location>
</feature>
<feature type="sequence variant" id="VAR_046075" description="In dbSNP:rs2361503.">
    <original>E</original>
    <variation>G</variation>
    <location>
        <position position="329"/>
    </location>
</feature>
<feature type="sequence variant" id="VAR_046076" description="In dbSNP:rs11563246.">
    <original>K</original>
    <variation>N</variation>
    <location>
        <position position="489"/>
    </location>
</feature>
<feature type="sequence variant" id="VAR_046077" description="In dbSNP:rs726016.">
    <original>W</original>
    <variation>R</variation>
    <location>
        <position position="978"/>
    </location>
</feature>
<feature type="sequence variant" id="VAR_046078" description="In dbSNP:rs719418.">
    <original>Q</original>
    <variation>E</variation>
    <location>
        <position position="1041"/>
    </location>
</feature>
<feature type="sequence variant" id="VAR_046079" description="In dbSNP:rs17864722.">
    <original>S</original>
    <variation>T</variation>
    <location>
        <position position="1075"/>
    </location>
</feature>
<feature type="sequence variant" id="VAR_046080" description="In dbSNP:rs1500480.">
    <original>F</original>
    <variation>S</variation>
    <location>
        <position position="1107"/>
    </location>
</feature>
<feature type="sequence variant" id="VAR_046081" description="In dbSNP:rs28900688.">
    <original>R</original>
    <variation>C</variation>
    <location>
        <position position="1141"/>
    </location>
</feature>
<feature type="sequence variant" id="VAR_046082" description="In dbSNP:rs6734083.">
    <original>V</original>
    <variation>M</variation>
    <location>
        <position position="1184"/>
    </location>
</feature>
<feature type="sequence variant" id="VAR_046085" description="In dbSNP:rs28900693.">
    <original>A</original>
    <variation>T</variation>
    <location>
        <position position="1410"/>
    </location>
</feature>
<feature type="sequence variant" id="VAR_046086" description="In dbSNP:rs28900694.">
    <original>T</original>
    <variation>A</variation>
    <location>
        <position position="1454"/>
    </location>
</feature>
<feature type="sequence variant" id="VAR_046087" description="In dbSNP:rs11563074.">
    <original>M</original>
    <variation>V</variation>
    <location>
        <position position="1537"/>
    </location>
</feature>
<feature type="sequence variant" id="VAR_046088" description="In dbSNP:rs28900700.">
    <original>F</original>
    <variation>L</variation>
    <location>
        <position position="1546"/>
    </location>
</feature>
<feature type="sequence variant" id="VAR_046089" description="In dbSNP:rs879665.">
    <original>A</original>
    <variation>T</variation>
    <location>
        <position position="1562"/>
    </location>
</feature>
<feature type="sequence variant" id="VAR_046090" description="In dbSNP:rs879664.">
    <original>V</original>
    <variation>I</variation>
    <location>
        <position position="1569"/>
    </location>
</feature>
<feature type="sequence variant" id="VAR_046091" description="In dbSNP:rs2270856.">
    <original>P</original>
    <variation>L</variation>
    <location>
        <position position="1643"/>
    </location>
</feature>
<gene>
    <name type="primary">MROH2A</name>
    <name type="synonym">HEATR7B1</name>
</gene>
<keyword id="KW-1267">Proteomics identification</keyword>
<keyword id="KW-1185">Reference proteome</keyword>
<keyword id="KW-0677">Repeat</keyword>
<organism>
    <name type="scientific">Homo sapiens</name>
    <name type="common">Human</name>
    <dbReference type="NCBI Taxonomy" id="9606"/>
    <lineage>
        <taxon>Eukaryota</taxon>
        <taxon>Metazoa</taxon>
        <taxon>Chordata</taxon>
        <taxon>Craniata</taxon>
        <taxon>Vertebrata</taxon>
        <taxon>Euteleostomi</taxon>
        <taxon>Mammalia</taxon>
        <taxon>Eutheria</taxon>
        <taxon>Euarchontoglires</taxon>
        <taxon>Primates</taxon>
        <taxon>Haplorrhini</taxon>
        <taxon>Catarrhini</taxon>
        <taxon>Hominidae</taxon>
        <taxon>Homo</taxon>
    </lineage>
</organism>
<name>MRO2A_HUMAN</name>
<protein>
    <recommendedName>
        <fullName>Maestro heat-like repeat-containing protein family member 2A</fullName>
    </recommendedName>
    <alternativeName>
        <fullName>HEAT repeat-containing protein 7B1</fullName>
    </alternativeName>
</protein>
<accession>A6NES4</accession>
<accession>F8VUA0</accession>
<dbReference type="EMBL" id="AC005538">
    <property type="status" value="NOT_ANNOTATED_CDS"/>
    <property type="molecule type" value="Genomic_DNA"/>
</dbReference>
<dbReference type="EMBL" id="AC006985">
    <property type="status" value="NOT_ANNOTATED_CDS"/>
    <property type="molecule type" value="Genomic_DNA"/>
</dbReference>
<dbReference type="CCDS" id="CCDS92974.1"/>
<dbReference type="RefSeq" id="NP_001381568.1">
    <property type="nucleotide sequence ID" value="NM_001394639.1"/>
</dbReference>
<dbReference type="FunCoup" id="A6NES4">
    <property type="interactions" value="111"/>
</dbReference>
<dbReference type="IntAct" id="A6NES4">
    <property type="interactions" value="1"/>
</dbReference>
<dbReference type="STRING" id="9606.ENSP00000477597"/>
<dbReference type="GlyGen" id="A6NES4">
    <property type="glycosylation" value="1 site"/>
</dbReference>
<dbReference type="iPTMnet" id="A6NES4"/>
<dbReference type="PhosphoSitePlus" id="A6NES4"/>
<dbReference type="SwissPalm" id="A6NES4"/>
<dbReference type="BioMuta" id="MROH2A"/>
<dbReference type="jPOST" id="A6NES4"/>
<dbReference type="MassIVE" id="A6NES4"/>
<dbReference type="PaxDb" id="9606-ENSP00000477597"/>
<dbReference type="PeptideAtlas" id="A6NES4"/>
<dbReference type="ProteomicsDB" id="1010"/>
<dbReference type="ProteomicsDB" id="28711"/>
<dbReference type="Antibodypedia" id="63003">
    <property type="antibodies" value="4 antibodies from 4 providers"/>
</dbReference>
<dbReference type="Ensembl" id="ENST00000389758.4">
    <property type="protein sequence ID" value="ENSP00000374408.3"/>
    <property type="gene ID" value="ENSG00000185038.15"/>
</dbReference>
<dbReference type="GeneID" id="339766"/>
<dbReference type="MANE-Select" id="ENST00000389758.4">
    <property type="protein sequence ID" value="ENSP00000374408.3"/>
    <property type="RefSeq nucleotide sequence ID" value="NM_001394639.1"/>
    <property type="RefSeq protein sequence ID" value="NP_001381568.1"/>
</dbReference>
<dbReference type="UCSC" id="uc061tvx.1">
    <property type="organism name" value="human"/>
</dbReference>
<dbReference type="AGR" id="HGNC:27936"/>
<dbReference type="GeneCards" id="MROH2A"/>
<dbReference type="HGNC" id="HGNC:27936">
    <property type="gene designation" value="MROH2A"/>
</dbReference>
<dbReference type="HPA" id="ENSG00000185038">
    <property type="expression patterns" value="Tissue enhanced (testis, thyroid gland)"/>
</dbReference>
<dbReference type="neXtProt" id="NX_A6NES4"/>
<dbReference type="OpenTargets" id="ENSG00000185038"/>
<dbReference type="PharmGKB" id="PA164720351"/>
<dbReference type="VEuPathDB" id="HostDB:ENSG00000185038"/>
<dbReference type="eggNOG" id="KOG2032">
    <property type="taxonomic scope" value="Eukaryota"/>
</dbReference>
<dbReference type="GeneTree" id="ENSGT00940000161309"/>
<dbReference type="HOGENOM" id="CLU_003168_1_0_1"/>
<dbReference type="InParanoid" id="A6NES4"/>
<dbReference type="OrthoDB" id="1884734at2759"/>
<dbReference type="PAN-GO" id="A6NES4">
    <property type="GO annotations" value="1 GO annotation based on evolutionary models"/>
</dbReference>
<dbReference type="TreeFam" id="TF315201"/>
<dbReference type="PathwayCommons" id="A6NES4"/>
<dbReference type="SignaLink" id="A6NES4"/>
<dbReference type="Pharos" id="A6NES4">
    <property type="development level" value="Tdark"/>
</dbReference>
<dbReference type="PRO" id="PR:A6NES4"/>
<dbReference type="Proteomes" id="UP000005640">
    <property type="component" value="Chromosome 2"/>
</dbReference>
<dbReference type="RNAct" id="A6NES4">
    <property type="molecule type" value="protein"/>
</dbReference>
<dbReference type="Bgee" id="ENSG00000185038">
    <property type="expression patterns" value="Expressed in male germ line stem cell (sensu Vertebrata) in testis and 61 other cell types or tissues"/>
</dbReference>
<dbReference type="ExpressionAtlas" id="A6NES4">
    <property type="expression patterns" value="baseline and differential"/>
</dbReference>
<dbReference type="GO" id="GO:0005737">
    <property type="term" value="C:cytoplasm"/>
    <property type="evidence" value="ECO:0000318"/>
    <property type="project" value="GO_Central"/>
</dbReference>
<dbReference type="Gene3D" id="1.25.10.10">
    <property type="entry name" value="Leucine-rich Repeat Variant"/>
    <property type="match status" value="2"/>
</dbReference>
<dbReference type="InterPro" id="IPR011989">
    <property type="entry name" value="ARM-like"/>
</dbReference>
<dbReference type="InterPro" id="IPR016024">
    <property type="entry name" value="ARM-type_fold"/>
</dbReference>
<dbReference type="InterPro" id="IPR055406">
    <property type="entry name" value="HEAT_Maestro"/>
</dbReference>
<dbReference type="InterPro" id="IPR055408">
    <property type="entry name" value="HEAT_MROH2B-like"/>
</dbReference>
<dbReference type="InterPro" id="IPR048465">
    <property type="entry name" value="Maestro-like_HEAT"/>
</dbReference>
<dbReference type="InterPro" id="IPR045206">
    <property type="entry name" value="Maestro_heat-like_prot"/>
</dbReference>
<dbReference type="InterPro" id="IPR056282">
    <property type="entry name" value="MROH2B-like_N_HEAT"/>
</dbReference>
<dbReference type="PANTHER" id="PTHR23120:SF14">
    <property type="entry name" value="MAESTRO HEAT-LIKE REPEAT-CONTAINING PROTEIN FAMILY MEMBER 2A"/>
    <property type="match status" value="1"/>
</dbReference>
<dbReference type="PANTHER" id="PTHR23120">
    <property type="entry name" value="MAESTRO-RELATED HEAT DOMAIN-CONTAINING"/>
    <property type="match status" value="1"/>
</dbReference>
<dbReference type="Pfam" id="PF21047">
    <property type="entry name" value="HEAT_Maestro"/>
    <property type="match status" value="1"/>
</dbReference>
<dbReference type="Pfam" id="PF23210">
    <property type="entry name" value="HEAT_Maestro_2"/>
    <property type="match status" value="1"/>
</dbReference>
<dbReference type="Pfam" id="PF23221">
    <property type="entry name" value="HEAT_MROH2B_1st"/>
    <property type="match status" value="1"/>
</dbReference>
<dbReference type="Pfam" id="PF23227">
    <property type="entry name" value="HEAT_MROH2B_C"/>
    <property type="match status" value="1"/>
</dbReference>
<dbReference type="SUPFAM" id="SSF48371">
    <property type="entry name" value="ARM repeat"/>
    <property type="match status" value="2"/>
</dbReference>
<sequence>MTEAITEAAVASSEEVSEERDDLGPLELHDSGTFQQVVNLLDIIDSESAKTDTTGAGLDMRKTLASVIIMEKATTEPSVVINTLIRCLQVPEISTQRKVNIYNILQDIIQQEGELEEQCVQRLVAIASKEMREIPEMEGYMKAEVASDTLVALSRNHFSLVMYELQHHLKPLNLTDEFVIITLAKLANGNVFEFMPYMGITLATIFTMLRLANEAKIRQAICSAMETFCETVQFYLKHLEESVYPVMTEEEFALKVFPMYRYFVTVWLRHYNPEVKLGVIKSLKPMLGLLLPNDDLREQVYDYIPLLLAEYQGSLEVLFVTQVLRQILELSVTTNTPVPQMQLHTIFTELHVQVCNKAPAQHQYSSQNLMEMVHCFVALARSYPKELMKFFFSQMETNKEAVRVGTLNLIRAIVSADEPRMSIRAIYLAIRVVKNTISDTRSKVRMAILHIIGQLALCGYQERIKGWGLKYLSVQLTLSTYKLTNRREKFYQRDLEERMVHKVTMDTVKIITSSVSGMTTEFWVRLLCYIMETDYVEALTPICISLTNLAEHQLHGQDVDVSVAGKSRQVDLPAPQKLLARLLVLMSSPYKGEGRGIAMLNLLRTLSQSIAPSMADMWELEIALLVRYLEEHTEFTWDQKAWEDKLIQFLRNSLKKTRGSSWSLRLSKELNNQIASFDSPSLEKGFLYRALGFTLATGLEASKVEVLLLELLYKTDYSNDFDSEGVIMCFGLCARGQVKTVLNVLHDFEERIQESEQSWQISAWRKDHPWRRETVKSALMVMYSCVASYCHPQLLLNLVDSPITAKIIHHYVSSCQDICLKMAFMKSVVQVTKAINNIKDLEDFHFAQKTTLTSIIVAVIKAEPTDNLVSPVRALAMEALSHLSKLKPFYSTEENSELMDISIHSVISLQLPGEDNESIKTLYANALSSLEQLMESLLQRQLDPKGLQEMVQLLEKWILSEKEWEREKAVSLHLYLMWIYVHSTAVCIHLKLGQFGTMVGLIAPCTCDAHQRTRMASMNVLSSLLDLHASQTCSLWGPSKQKELEKCKGDLQSTDVEKIFCASSRIAKVVCMEFSCDEVVSLIQKLCENTGAMNLQHDKASVTWIAFFLQMRAKELEDKVAEILSAILVHLPVVDHPEVRRLLIDGILLLAHHHQETILTSLLRQPLPMESHLAEVWLAVSENVPFARTMLHSLMGRLQSRLSPRISATSKADIWRLAAVDPLMTLCTIHLLIQKLDENDKLPDFLPDLIYTLLLQLGSSHRPEAAPPVLKMWKLVHTTPLPEEMNLQRVTIKSMQLLFKRVKSQHLAHTLDEQAVWDLLQDGGTFLEGVSLLARLCMQHVEGHRQRLAELVLRGMDSEVLSCRISSTAVCFMSGPVLYQEKLLKPAALLLEKGADQEEDEALRVLSLRALGNMALGAPKKVKQYRKVLLEKCLGPLREPVSNSVTAEGMEALTKILAELREGDVGSSFDAMSEQCRIFFDNESELLRLKAFILFGKLARVVGMSKKHFFKGEVKKAWIPLMLHSQDPCSNAAQACMATMFQCVHFWGWKSLEHPSGPSDTATDDKMTVFQTTMCSILTRKKPAVLYRFLLETMAYVKNNLSRIRIAACNLAGIIMKQMSTHYLKKLDFPALRNSLQELQLDPDPGVRRAALETLTVLDSCSQHGFLASPQGMS</sequence>